<reference key="1">
    <citation type="journal article" date="2009" name="BMC Genomics">
        <title>Pseudogene accumulation in the evolutionary histories of Salmonella enterica serovars Paratyphi A and Typhi.</title>
        <authorList>
            <person name="Holt K.E."/>
            <person name="Thomson N.R."/>
            <person name="Wain J."/>
            <person name="Langridge G.C."/>
            <person name="Hasan R."/>
            <person name="Bhutta Z.A."/>
            <person name="Quail M.A."/>
            <person name="Norbertczak H."/>
            <person name="Walker D."/>
            <person name="Simmonds M."/>
            <person name="White B."/>
            <person name="Bason N."/>
            <person name="Mungall K."/>
            <person name="Dougan G."/>
            <person name="Parkhill J."/>
        </authorList>
    </citation>
    <scope>NUCLEOTIDE SEQUENCE [LARGE SCALE GENOMIC DNA]</scope>
    <source>
        <strain>AKU_12601</strain>
    </source>
</reference>
<evidence type="ECO:0000255" key="1">
    <source>
        <dbReference type="HAMAP-Rule" id="MF_00418"/>
    </source>
</evidence>
<evidence type="ECO:0000305" key="2"/>
<organism>
    <name type="scientific">Salmonella paratyphi A (strain AKU_12601)</name>
    <dbReference type="NCBI Taxonomy" id="554290"/>
    <lineage>
        <taxon>Bacteria</taxon>
        <taxon>Pseudomonadati</taxon>
        <taxon>Pseudomonadota</taxon>
        <taxon>Gammaproteobacteria</taxon>
        <taxon>Enterobacterales</taxon>
        <taxon>Enterobacteriaceae</taxon>
        <taxon>Salmonella</taxon>
    </lineage>
</organism>
<protein>
    <recommendedName>
        <fullName evidence="1">4-hydroxy-tetrahydrodipicolinate synthase</fullName>
        <shortName evidence="1">HTPA synthase</shortName>
        <ecNumber evidence="1">4.3.3.7</ecNumber>
    </recommendedName>
</protein>
<proteinExistence type="inferred from homology"/>
<feature type="chain" id="PRO_1000124062" description="4-hydroxy-tetrahydrodipicolinate synthase">
    <location>
        <begin position="1"/>
        <end position="292"/>
    </location>
</feature>
<feature type="active site" description="Proton donor/acceptor" evidence="1">
    <location>
        <position position="133"/>
    </location>
</feature>
<feature type="active site" description="Schiff-base intermediate with substrate" evidence="1">
    <location>
        <position position="161"/>
    </location>
</feature>
<feature type="binding site" evidence="1">
    <location>
        <position position="45"/>
    </location>
    <ligand>
        <name>pyruvate</name>
        <dbReference type="ChEBI" id="CHEBI:15361"/>
    </ligand>
</feature>
<feature type="binding site" evidence="1">
    <location>
        <position position="203"/>
    </location>
    <ligand>
        <name>pyruvate</name>
        <dbReference type="ChEBI" id="CHEBI:15361"/>
    </ligand>
</feature>
<feature type="site" description="Part of a proton relay during catalysis" evidence="1">
    <location>
        <position position="44"/>
    </location>
</feature>
<feature type="site" description="Part of a proton relay during catalysis" evidence="1">
    <location>
        <position position="107"/>
    </location>
</feature>
<name>DAPA_SALPK</name>
<keyword id="KW-0028">Amino-acid biosynthesis</keyword>
<keyword id="KW-0963">Cytoplasm</keyword>
<keyword id="KW-0220">Diaminopimelate biosynthesis</keyword>
<keyword id="KW-0456">Lyase</keyword>
<keyword id="KW-0457">Lysine biosynthesis</keyword>
<keyword id="KW-0704">Schiff base</keyword>
<sequence length="292" mass="31294">MFTGSIVALVTPMDEKGNVSRSCLKKLIDYHVANGTSAIVSVGTTGESATLSHDEHGDVVMMTLELADGRIPVIAGTGANATAEAISLTQRFNDSGIVGCLTVTPYYNRPTQEGLFQHFKAIAEHTDLPQILYNVPSRTGCDMLPETVGRLAEIKNIIAIKEATGNLTRVHQIKELVSDDFILLSGDDASALDFMQLGGHGVISVTANVAAREMADMCKLAAEGQFAEARAINQRLMPLHNKLFVEPNPIPVKWACKALGLVATDTLRLPMTPITDHGRDIVKAALQHAGLL</sequence>
<gene>
    <name evidence="1" type="primary">dapA</name>
    <name type="ordered locus">SSPA0355</name>
</gene>
<accession>B5BB16</accession>
<dbReference type="EC" id="4.3.3.7" evidence="1"/>
<dbReference type="EMBL" id="FM200053">
    <property type="protein sequence ID" value="CAR58478.1"/>
    <property type="molecule type" value="Genomic_DNA"/>
</dbReference>
<dbReference type="RefSeq" id="WP_000494020.1">
    <property type="nucleotide sequence ID" value="NC_011147.1"/>
</dbReference>
<dbReference type="SMR" id="B5BB16"/>
<dbReference type="KEGG" id="sek:SSPA0355"/>
<dbReference type="HOGENOM" id="CLU_049343_7_1_6"/>
<dbReference type="UniPathway" id="UPA00034">
    <property type="reaction ID" value="UER00017"/>
</dbReference>
<dbReference type="Proteomes" id="UP000001869">
    <property type="component" value="Chromosome"/>
</dbReference>
<dbReference type="GO" id="GO:0005829">
    <property type="term" value="C:cytosol"/>
    <property type="evidence" value="ECO:0007669"/>
    <property type="project" value="TreeGrafter"/>
</dbReference>
<dbReference type="GO" id="GO:0008840">
    <property type="term" value="F:4-hydroxy-tetrahydrodipicolinate synthase activity"/>
    <property type="evidence" value="ECO:0007669"/>
    <property type="project" value="UniProtKB-UniRule"/>
</dbReference>
<dbReference type="GO" id="GO:0019877">
    <property type="term" value="P:diaminopimelate biosynthetic process"/>
    <property type="evidence" value="ECO:0007669"/>
    <property type="project" value="UniProtKB-UniRule"/>
</dbReference>
<dbReference type="GO" id="GO:0009089">
    <property type="term" value="P:lysine biosynthetic process via diaminopimelate"/>
    <property type="evidence" value="ECO:0007669"/>
    <property type="project" value="UniProtKB-UniRule"/>
</dbReference>
<dbReference type="CDD" id="cd00950">
    <property type="entry name" value="DHDPS"/>
    <property type="match status" value="1"/>
</dbReference>
<dbReference type="FunFam" id="3.20.20.70:FF:000046">
    <property type="entry name" value="4-hydroxy-tetrahydrodipicolinate synthase"/>
    <property type="match status" value="1"/>
</dbReference>
<dbReference type="Gene3D" id="3.20.20.70">
    <property type="entry name" value="Aldolase class I"/>
    <property type="match status" value="1"/>
</dbReference>
<dbReference type="HAMAP" id="MF_00418">
    <property type="entry name" value="DapA"/>
    <property type="match status" value="1"/>
</dbReference>
<dbReference type="InterPro" id="IPR013785">
    <property type="entry name" value="Aldolase_TIM"/>
</dbReference>
<dbReference type="InterPro" id="IPR005263">
    <property type="entry name" value="DapA"/>
</dbReference>
<dbReference type="InterPro" id="IPR002220">
    <property type="entry name" value="DapA-like"/>
</dbReference>
<dbReference type="InterPro" id="IPR020625">
    <property type="entry name" value="Schiff_base-form_aldolases_AS"/>
</dbReference>
<dbReference type="InterPro" id="IPR020624">
    <property type="entry name" value="Schiff_base-form_aldolases_CS"/>
</dbReference>
<dbReference type="NCBIfam" id="TIGR00674">
    <property type="entry name" value="dapA"/>
    <property type="match status" value="1"/>
</dbReference>
<dbReference type="PANTHER" id="PTHR12128:SF66">
    <property type="entry name" value="4-HYDROXY-2-OXOGLUTARATE ALDOLASE, MITOCHONDRIAL"/>
    <property type="match status" value="1"/>
</dbReference>
<dbReference type="PANTHER" id="PTHR12128">
    <property type="entry name" value="DIHYDRODIPICOLINATE SYNTHASE"/>
    <property type="match status" value="1"/>
</dbReference>
<dbReference type="Pfam" id="PF00701">
    <property type="entry name" value="DHDPS"/>
    <property type="match status" value="1"/>
</dbReference>
<dbReference type="PIRSF" id="PIRSF001365">
    <property type="entry name" value="DHDPS"/>
    <property type="match status" value="1"/>
</dbReference>
<dbReference type="PRINTS" id="PR00146">
    <property type="entry name" value="DHPICSNTHASE"/>
</dbReference>
<dbReference type="SMART" id="SM01130">
    <property type="entry name" value="DHDPS"/>
    <property type="match status" value="1"/>
</dbReference>
<dbReference type="SUPFAM" id="SSF51569">
    <property type="entry name" value="Aldolase"/>
    <property type="match status" value="1"/>
</dbReference>
<dbReference type="PROSITE" id="PS00665">
    <property type="entry name" value="DHDPS_1"/>
    <property type="match status" value="1"/>
</dbReference>
<dbReference type="PROSITE" id="PS00666">
    <property type="entry name" value="DHDPS_2"/>
    <property type="match status" value="1"/>
</dbReference>
<comment type="function">
    <text evidence="1">Catalyzes the condensation of (S)-aspartate-beta-semialdehyde [(S)-ASA] and pyruvate to 4-hydroxy-tetrahydrodipicolinate (HTPA).</text>
</comment>
<comment type="catalytic activity">
    <reaction evidence="1">
        <text>L-aspartate 4-semialdehyde + pyruvate = (2S,4S)-4-hydroxy-2,3,4,5-tetrahydrodipicolinate + H2O + H(+)</text>
        <dbReference type="Rhea" id="RHEA:34171"/>
        <dbReference type="ChEBI" id="CHEBI:15361"/>
        <dbReference type="ChEBI" id="CHEBI:15377"/>
        <dbReference type="ChEBI" id="CHEBI:15378"/>
        <dbReference type="ChEBI" id="CHEBI:67139"/>
        <dbReference type="ChEBI" id="CHEBI:537519"/>
        <dbReference type="EC" id="4.3.3.7"/>
    </reaction>
</comment>
<comment type="pathway">
    <text evidence="1">Amino-acid biosynthesis; L-lysine biosynthesis via DAP pathway; (S)-tetrahydrodipicolinate from L-aspartate: step 3/4.</text>
</comment>
<comment type="subunit">
    <text evidence="1">Homotetramer; dimer of dimers.</text>
</comment>
<comment type="subcellular location">
    <subcellularLocation>
        <location evidence="1">Cytoplasm</location>
    </subcellularLocation>
</comment>
<comment type="similarity">
    <text evidence="1">Belongs to the DapA family.</text>
</comment>
<comment type="caution">
    <text evidence="2">Was originally thought to be a dihydrodipicolinate synthase (DHDPS), catalyzing the condensation of (S)-aspartate-beta-semialdehyde [(S)-ASA] and pyruvate to dihydrodipicolinate (DHDP). However, it was shown in E.coli that the product of the enzymatic reaction is not dihydrodipicolinate but in fact (4S)-4-hydroxy-2,3,4,5-tetrahydro-(2S)-dipicolinic acid (HTPA), and that the consecutive dehydration reaction leading to DHDP is not spontaneous but catalyzed by DapB.</text>
</comment>